<keyword id="KW-0677">Repeat</keyword>
<keyword id="KW-0694">RNA-binding</keyword>
<protein>
    <recommendedName>
        <fullName>Protein elav</fullName>
    </recommendedName>
    <alternativeName>
        <fullName>Embryonic lethal abnormal visual protein</fullName>
    </alternativeName>
</protein>
<comment type="function">
    <text>Probably involved in the RNA metabolism of neurons.</text>
</comment>
<comment type="similarity">
    <text evidence="2">Belongs to the RRM elav family.</text>
</comment>
<name>ELAV_DROVI</name>
<feature type="chain" id="PRO_0000081576" description="Protein elav">
    <location>
        <begin position="1"/>
        <end position="519"/>
    </location>
</feature>
<feature type="domain" description="RRM 1" evidence="1">
    <location>
        <begin position="185"/>
        <end position="276"/>
    </location>
</feature>
<feature type="domain" description="RRM 2" evidence="1">
    <location>
        <begin position="284"/>
        <end position="365"/>
    </location>
</feature>
<feature type="domain" description="RRM 3" evidence="1">
    <location>
        <begin position="438"/>
        <end position="516"/>
    </location>
</feature>
<dbReference type="EMBL" id="M61748">
    <property type="protein sequence ID" value="AAA28505.1"/>
    <property type="molecule type" value="Genomic_DNA"/>
</dbReference>
<dbReference type="PIR" id="A40252">
    <property type="entry name" value="A40252"/>
</dbReference>
<dbReference type="SMR" id="P23241"/>
<dbReference type="EnsemblMetazoa" id="FBtr0440294">
    <property type="protein sequence ID" value="FBpp0396903"/>
    <property type="gene ID" value="FBgn0013110"/>
</dbReference>
<dbReference type="EnsemblMetazoa" id="XM_032439613.1">
    <property type="protein sequence ID" value="XP_032295504.1"/>
    <property type="gene ID" value="LOC6636083"/>
</dbReference>
<dbReference type="eggNOG" id="KOG0145">
    <property type="taxonomic scope" value="Eukaryota"/>
</dbReference>
<dbReference type="OrthoDB" id="266020at2759"/>
<dbReference type="GO" id="GO:1990904">
    <property type="term" value="C:ribonucleoprotein complex"/>
    <property type="evidence" value="ECO:0007669"/>
    <property type="project" value="InterPro"/>
</dbReference>
<dbReference type="GO" id="GO:0003723">
    <property type="term" value="F:RNA binding"/>
    <property type="evidence" value="ECO:0007669"/>
    <property type="project" value="UniProtKB-KW"/>
</dbReference>
<dbReference type="CDD" id="cd12650">
    <property type="entry name" value="RRM1_Hu"/>
    <property type="match status" value="1"/>
</dbReference>
<dbReference type="CDD" id="cd12652">
    <property type="entry name" value="RRM2_Hu"/>
    <property type="match status" value="1"/>
</dbReference>
<dbReference type="CDD" id="cd12377">
    <property type="entry name" value="RRM3_Hu"/>
    <property type="match status" value="1"/>
</dbReference>
<dbReference type="FunFam" id="3.30.70.330:FF:000480">
    <property type="entry name" value="Fne, isoform A"/>
    <property type="match status" value="1"/>
</dbReference>
<dbReference type="FunFam" id="3.30.70.330:FF:000510">
    <property type="entry name" value="protein elav isoform X1"/>
    <property type="match status" value="1"/>
</dbReference>
<dbReference type="FunFam" id="3.30.70.330:FF:000205">
    <property type="entry name" value="Sex lethal, isoform B"/>
    <property type="match status" value="1"/>
</dbReference>
<dbReference type="Gene3D" id="3.30.70.330">
    <property type="match status" value="3"/>
</dbReference>
<dbReference type="InterPro" id="IPR006548">
    <property type="entry name" value="ELAD_HU_SF"/>
</dbReference>
<dbReference type="InterPro" id="IPR034775">
    <property type="entry name" value="Elav_RRM1"/>
</dbReference>
<dbReference type="InterPro" id="IPR002343">
    <property type="entry name" value="Hud_Sxl_RNA"/>
</dbReference>
<dbReference type="InterPro" id="IPR012677">
    <property type="entry name" value="Nucleotide-bd_a/b_plait_sf"/>
</dbReference>
<dbReference type="InterPro" id="IPR035979">
    <property type="entry name" value="RBD_domain_sf"/>
</dbReference>
<dbReference type="InterPro" id="IPR000504">
    <property type="entry name" value="RRM_dom"/>
</dbReference>
<dbReference type="NCBIfam" id="TIGR01661">
    <property type="entry name" value="ELAV_HUD_SF"/>
    <property type="match status" value="1"/>
</dbReference>
<dbReference type="PANTHER" id="PTHR10352">
    <property type="entry name" value="EUKARYOTIC TRANSLATION INITIATION FACTOR 3 SUBUNIT G"/>
    <property type="match status" value="1"/>
</dbReference>
<dbReference type="Pfam" id="PF00076">
    <property type="entry name" value="RRM_1"/>
    <property type="match status" value="4"/>
</dbReference>
<dbReference type="PRINTS" id="PR00961">
    <property type="entry name" value="HUDSXLRNA"/>
</dbReference>
<dbReference type="SMART" id="SM00360">
    <property type="entry name" value="RRM"/>
    <property type="match status" value="3"/>
</dbReference>
<dbReference type="SUPFAM" id="SSF54928">
    <property type="entry name" value="RNA-binding domain, RBD"/>
    <property type="match status" value="2"/>
</dbReference>
<dbReference type="PROSITE" id="PS50102">
    <property type="entry name" value="RRM"/>
    <property type="match status" value="3"/>
</dbReference>
<sequence>MDFMMANTGATGLDTQAQLMQSAAAAAAVAATNAAAPVQNAAAVAAAAQLQQQQQQVQQAILQVQQQQTQQAVAAAAAAVTQQLQQQQQAVVQQAVVQQQQQQQQQQQQQQVVQQQQVQQVQQAVVAVQQQQQQQQQQQQQQQVVQQQQQQVVQQQVQQQVQQANTNGNSGGAQNGSNGSTETRTNLIVNYLPQTMTEDEIRSLFSSVGEIESVKLIRDKSQVYIDPLNPQAPSKGQSLGYGFVNYVRPQDAEQAVNVLNGLRLQNKTIKVSFARPSSDAIKGANLYVSGLPKTMTQQELEAIFAPFGAIITSRILQNAGNDTQTKGVGFIRFDKREEATRAIIALNGTTPSSCTDPIVVKFSNTPGSTSKIIQPQLPAFLNPQLVRRIGGAMHTPVNKGLARFSPMAGDMLDVMLPNGLGAAAAAATTLASGPGGAYPIFIYNLAPETEEAALWQLFGPFGAVQSVKIVKDPTTNQCKGYGFVSMTNYDEAAMAIRALNGYTMGNRVLQVSFKTNKAK</sequence>
<evidence type="ECO:0000255" key="1">
    <source>
        <dbReference type="PROSITE-ProRule" id="PRU00176"/>
    </source>
</evidence>
<evidence type="ECO:0000305" key="2"/>
<gene>
    <name type="primary">elav</name>
</gene>
<organism>
    <name type="scientific">Drosophila virilis</name>
    <name type="common">Fruit fly</name>
    <dbReference type="NCBI Taxonomy" id="7244"/>
    <lineage>
        <taxon>Eukaryota</taxon>
        <taxon>Metazoa</taxon>
        <taxon>Ecdysozoa</taxon>
        <taxon>Arthropoda</taxon>
        <taxon>Hexapoda</taxon>
        <taxon>Insecta</taxon>
        <taxon>Pterygota</taxon>
        <taxon>Neoptera</taxon>
        <taxon>Endopterygota</taxon>
        <taxon>Diptera</taxon>
        <taxon>Brachycera</taxon>
        <taxon>Muscomorpha</taxon>
        <taxon>Ephydroidea</taxon>
        <taxon>Drosophilidae</taxon>
        <taxon>Drosophila</taxon>
    </lineage>
</organism>
<proteinExistence type="inferred from homology"/>
<reference key="1">
    <citation type="journal article" date="1991" name="Mol. Cell. Biol.">
        <title>Organizational analysis of elav gene and functional analysis of ELAV protein of Drosophila melanogaster and Drosophila virilis.</title>
        <authorList>
            <person name="Yao K.-M."/>
            <person name="White K."/>
        </authorList>
    </citation>
    <scope>NUCLEOTIDE SEQUENCE [GENOMIC DNA]</scope>
</reference>
<accession>P23241</accession>